<gene>
    <name type="primary">hdac3</name>
    <name type="ORF">TEgg067n06.1</name>
</gene>
<keyword id="KW-0090">Biological rhythms</keyword>
<keyword id="KW-0156">Chromatin regulator</keyword>
<keyword id="KW-0158">Chromosome</keyword>
<keyword id="KW-0963">Cytoplasm</keyword>
<keyword id="KW-0378">Hydrolase</keyword>
<keyword id="KW-0479">Metal-binding</keyword>
<keyword id="KW-0539">Nucleus</keyword>
<keyword id="KW-1185">Reference proteome</keyword>
<keyword id="KW-0678">Repressor</keyword>
<keyword id="KW-0804">Transcription</keyword>
<keyword id="KW-0805">Transcription regulation</keyword>
<keyword id="KW-0862">Zinc</keyword>
<accession>Q28DV3</accession>
<protein>
    <recommendedName>
        <fullName>Histone deacetylase 3</fullName>
        <shortName>HD3</shortName>
        <ecNumber evidence="1">3.5.1.98</ecNumber>
    </recommendedName>
    <alternativeName>
        <fullName>Protein deacetylase HDAC3</fullName>
        <ecNumber evidence="1">3.5.1.-</ecNumber>
    </alternativeName>
    <alternativeName>
        <fullName>Protein deacylase HDAC3</fullName>
        <ecNumber evidence="1">3.5.1.-</ecNumber>
    </alternativeName>
</protein>
<sequence length="428" mass="48998">MAKTVAYFYDPDVGNFHYGTGHPMKPHRLSLTHSLVLHYGLYKKMIVFKPYQASQHDMCRFHSEDYIDFLQRVSPNNMQGFTKSLNAFNVGDDCPVFPGLFEFCSRYTGASLQGATQLNNKICDIAINWAGGLHHAKKFEASGFCYVNDIVIGILELLKYHPRVLYVDIDIHHGDGVQEAFYLTDRVMTVSFHKYGNYFFPGTGDMYEVGAESGRYYCLNVPLRDGIDDQSYRHLFQPVIKQVIDFYQPTCIVLQCGADSLGCDRLGCFNLSIRGHGECVQYVKSFNIPLLVLGGGGYTVRNVARCWTYETSLLVDETISEELPYSEYFEYFAPDFTLHPDVSTRIENQNSRQYLDQIRQTIFENLKMLNHAPSVQIHDVPSDILSYERTDEPDPEERGSEDNYSRPEASNEFYDGDHDNDKESDVEI</sequence>
<dbReference type="EC" id="3.5.1.98" evidence="1"/>
<dbReference type="EC" id="3.5.1.-" evidence="1"/>
<dbReference type="EMBL" id="CR848582">
    <property type="protein sequence ID" value="CAJ81493.1"/>
    <property type="molecule type" value="mRNA"/>
</dbReference>
<dbReference type="RefSeq" id="NP_001016883.1">
    <property type="nucleotide sequence ID" value="NM_001016883.2"/>
</dbReference>
<dbReference type="SMR" id="Q28DV3"/>
<dbReference type="FunCoup" id="Q28DV3">
    <property type="interactions" value="2137"/>
</dbReference>
<dbReference type="STRING" id="8364.ENSXETP00000037236"/>
<dbReference type="PaxDb" id="8364-ENSXETP00000005840"/>
<dbReference type="GeneID" id="549637"/>
<dbReference type="KEGG" id="xtr:549637"/>
<dbReference type="AGR" id="Xenbase:XB-GENE-481106"/>
<dbReference type="CTD" id="8841"/>
<dbReference type="Xenbase" id="XB-GENE-481106">
    <property type="gene designation" value="hdac3"/>
</dbReference>
<dbReference type="eggNOG" id="KOG1342">
    <property type="taxonomic scope" value="Eukaryota"/>
</dbReference>
<dbReference type="HOGENOM" id="CLU_007727_7_6_1"/>
<dbReference type="InParanoid" id="Q28DV3"/>
<dbReference type="OMA" id="GWLRAFH"/>
<dbReference type="OrthoDB" id="1918432at2759"/>
<dbReference type="Reactome" id="R-XTR-350054">
    <property type="pathway name" value="Notch-HLH transcription pathway"/>
</dbReference>
<dbReference type="Reactome" id="R-XTR-400206">
    <property type="pathway name" value="Regulation of lipid metabolism by PPARalpha"/>
</dbReference>
<dbReference type="Reactome" id="R-XTR-9029569">
    <property type="pathway name" value="NR1H3 &amp; NR1H2 regulate gene expression linked to cholesterol transport and efflux"/>
</dbReference>
<dbReference type="Reactome" id="R-XTR-9701898">
    <property type="pathway name" value="STAT3 nuclear events downstream of ALK signaling"/>
</dbReference>
<dbReference type="Reactome" id="R-XTR-9841922">
    <property type="pathway name" value="MLL4 and MLL3 complexes regulate expression of PPARG target genes in adipogenesis and hepatic steatosis"/>
</dbReference>
<dbReference type="Proteomes" id="UP000008143">
    <property type="component" value="Chromosome 3"/>
</dbReference>
<dbReference type="Bgee" id="ENSXETG00000002708">
    <property type="expression patterns" value="Expressed in egg cell and 13 other cell types or tissues"/>
</dbReference>
<dbReference type="ExpressionAtlas" id="Q28DV3">
    <property type="expression patterns" value="baseline"/>
</dbReference>
<dbReference type="GO" id="GO:0005694">
    <property type="term" value="C:chromosome"/>
    <property type="evidence" value="ECO:0007669"/>
    <property type="project" value="UniProtKB-SubCell"/>
</dbReference>
<dbReference type="GO" id="GO:0005737">
    <property type="term" value="C:cytoplasm"/>
    <property type="evidence" value="ECO:0000250"/>
    <property type="project" value="UniProtKB"/>
</dbReference>
<dbReference type="GO" id="GO:0005829">
    <property type="term" value="C:cytosol"/>
    <property type="evidence" value="ECO:0007669"/>
    <property type="project" value="UniProtKB-SubCell"/>
</dbReference>
<dbReference type="GO" id="GO:0005634">
    <property type="term" value="C:nucleus"/>
    <property type="evidence" value="ECO:0000250"/>
    <property type="project" value="UniProtKB"/>
</dbReference>
<dbReference type="GO" id="GO:0017053">
    <property type="term" value="C:transcription repressor complex"/>
    <property type="evidence" value="ECO:0000250"/>
    <property type="project" value="UniProtKB"/>
</dbReference>
<dbReference type="GO" id="GO:0003682">
    <property type="term" value="F:chromatin binding"/>
    <property type="evidence" value="ECO:0000250"/>
    <property type="project" value="UniProtKB"/>
</dbReference>
<dbReference type="GO" id="GO:0141221">
    <property type="term" value="F:histone deacetylase activity, hydrolytic mechanism"/>
    <property type="evidence" value="ECO:0007669"/>
    <property type="project" value="UniProtKB-EC"/>
</dbReference>
<dbReference type="GO" id="GO:0160009">
    <property type="term" value="F:histone decrotonylase activity"/>
    <property type="evidence" value="ECO:0000250"/>
    <property type="project" value="UniProtKB"/>
</dbReference>
<dbReference type="GO" id="GO:0046872">
    <property type="term" value="F:metal ion binding"/>
    <property type="evidence" value="ECO:0007669"/>
    <property type="project" value="UniProtKB-KW"/>
</dbReference>
<dbReference type="GO" id="GO:0160010">
    <property type="term" value="F:protein de-2-hydroxyisobutyrylase activity"/>
    <property type="evidence" value="ECO:0000250"/>
    <property type="project" value="UniProtKB"/>
</dbReference>
<dbReference type="GO" id="GO:0160008">
    <property type="term" value="F:protein decrotonylase activity"/>
    <property type="evidence" value="ECO:0000250"/>
    <property type="project" value="UniProtKB"/>
</dbReference>
<dbReference type="GO" id="GO:0033558">
    <property type="term" value="F:protein lysine deacetylase activity"/>
    <property type="evidence" value="ECO:0000250"/>
    <property type="project" value="UniProtKB"/>
</dbReference>
<dbReference type="GO" id="GO:0160216">
    <property type="term" value="F:protein lysine delactylase activity"/>
    <property type="evidence" value="ECO:0000250"/>
    <property type="project" value="UniProtKB"/>
</dbReference>
<dbReference type="GO" id="GO:0003714">
    <property type="term" value="F:transcription corepressor activity"/>
    <property type="evidence" value="ECO:0000250"/>
    <property type="project" value="UniProtKB"/>
</dbReference>
<dbReference type="GO" id="GO:0032922">
    <property type="term" value="P:circadian regulation of gene expression"/>
    <property type="evidence" value="ECO:0000250"/>
    <property type="project" value="UniProtKB"/>
</dbReference>
<dbReference type="GO" id="GO:0000122">
    <property type="term" value="P:negative regulation of transcription by RNA polymerase II"/>
    <property type="evidence" value="ECO:0000250"/>
    <property type="project" value="UniProtKB"/>
</dbReference>
<dbReference type="GO" id="GO:0042752">
    <property type="term" value="P:regulation of circadian rhythm"/>
    <property type="evidence" value="ECO:0000250"/>
    <property type="project" value="UniProtKB"/>
</dbReference>
<dbReference type="CDD" id="cd10005">
    <property type="entry name" value="HDAC3"/>
    <property type="match status" value="1"/>
</dbReference>
<dbReference type="FunFam" id="3.40.800.20:FF:000004">
    <property type="entry name" value="Histone deacetylase"/>
    <property type="match status" value="1"/>
</dbReference>
<dbReference type="Gene3D" id="3.40.800.20">
    <property type="entry name" value="Histone deacetylase domain"/>
    <property type="match status" value="1"/>
</dbReference>
<dbReference type="InterPro" id="IPR050284">
    <property type="entry name" value="HDAC_PDAC"/>
</dbReference>
<dbReference type="InterPro" id="IPR000286">
    <property type="entry name" value="His_deacetylse"/>
</dbReference>
<dbReference type="InterPro" id="IPR003084">
    <property type="entry name" value="His_deacetylse_1"/>
</dbReference>
<dbReference type="InterPro" id="IPR023801">
    <property type="entry name" value="His_deacetylse_dom"/>
</dbReference>
<dbReference type="InterPro" id="IPR037138">
    <property type="entry name" value="His_deacetylse_dom_sf"/>
</dbReference>
<dbReference type="InterPro" id="IPR023696">
    <property type="entry name" value="Ureohydrolase_dom_sf"/>
</dbReference>
<dbReference type="PANTHER" id="PTHR10625:SF36">
    <property type="entry name" value="HISTONE DEACETYLASE 3"/>
    <property type="match status" value="1"/>
</dbReference>
<dbReference type="PANTHER" id="PTHR10625">
    <property type="entry name" value="HISTONE DEACETYLASE HDAC1-RELATED"/>
    <property type="match status" value="1"/>
</dbReference>
<dbReference type="Pfam" id="PF00850">
    <property type="entry name" value="Hist_deacetyl"/>
    <property type="match status" value="1"/>
</dbReference>
<dbReference type="PIRSF" id="PIRSF037913">
    <property type="entry name" value="His_deacetylse_1"/>
    <property type="match status" value="1"/>
</dbReference>
<dbReference type="PRINTS" id="PR01270">
    <property type="entry name" value="HDASUPER"/>
</dbReference>
<dbReference type="PRINTS" id="PR01271">
    <property type="entry name" value="HISDACETLASE"/>
</dbReference>
<dbReference type="SUPFAM" id="SSF52768">
    <property type="entry name" value="Arginase/deacetylase"/>
    <property type="match status" value="1"/>
</dbReference>
<proteinExistence type="evidence at transcript level"/>
<organism>
    <name type="scientific">Xenopus tropicalis</name>
    <name type="common">Western clawed frog</name>
    <name type="synonym">Silurana tropicalis</name>
    <dbReference type="NCBI Taxonomy" id="8364"/>
    <lineage>
        <taxon>Eukaryota</taxon>
        <taxon>Metazoa</taxon>
        <taxon>Chordata</taxon>
        <taxon>Craniata</taxon>
        <taxon>Vertebrata</taxon>
        <taxon>Euteleostomi</taxon>
        <taxon>Amphibia</taxon>
        <taxon>Batrachia</taxon>
        <taxon>Anura</taxon>
        <taxon>Pipoidea</taxon>
        <taxon>Pipidae</taxon>
        <taxon>Xenopodinae</taxon>
        <taxon>Xenopus</taxon>
        <taxon>Silurana</taxon>
    </lineage>
</organism>
<evidence type="ECO:0000250" key="1">
    <source>
        <dbReference type="UniProtKB" id="O15379"/>
    </source>
</evidence>
<evidence type="ECO:0000250" key="2">
    <source>
        <dbReference type="UniProtKB" id="Q13547"/>
    </source>
</evidence>
<evidence type="ECO:0000256" key="3">
    <source>
        <dbReference type="SAM" id="MobiDB-lite"/>
    </source>
</evidence>
<evidence type="ECO:0000305" key="4"/>
<comment type="function">
    <text evidence="1">Histone deacetylase that catalyzes the deacetylation of lysine residues on the N-terminal part of the core histones (H2A, H2B, H3 and H4), and some other non-histone substrates. Histone deacetylation gives a tag for epigenetic repression and plays an important role in transcriptional regulation, cell cycle progression and developmental events. Histone deacetylases act via the formation of large multiprotein complexes, such as N-Cor repressor complex, which activate the histone deacetylase activity. Participates in the BCL6 transcriptional repressor activity by deacetylating the H3 'Lys-27' (H3K27) on enhancer elements, antagonizing EP300 acetyltransferase activity and repressing proximal gene expression. Also functions as a deacetylase for non-histone targets. In addition to protein deacetylase activity, also acts as a protein-lysine deacylase by recognizing other acyl groups: catalyzes removal of (2E)-butenoyl (crotonyl), lactoyl (lactyl) and 2-hydroxyisobutanoyl (2-hydroxyisobutyryl) acyl groups from lysine residues, leading to protein decrotonylation, delactylation and de-2-hydroxyisobutyrylation, respectively.</text>
</comment>
<comment type="catalytic activity">
    <reaction evidence="1">
        <text>N(6)-acetyl-L-lysyl-[histone] + H2O = L-lysyl-[histone] + acetate</text>
        <dbReference type="Rhea" id="RHEA:58196"/>
        <dbReference type="Rhea" id="RHEA-COMP:9845"/>
        <dbReference type="Rhea" id="RHEA-COMP:11338"/>
        <dbReference type="ChEBI" id="CHEBI:15377"/>
        <dbReference type="ChEBI" id="CHEBI:29969"/>
        <dbReference type="ChEBI" id="CHEBI:30089"/>
        <dbReference type="ChEBI" id="CHEBI:61930"/>
        <dbReference type="EC" id="3.5.1.98"/>
    </reaction>
    <physiologicalReaction direction="left-to-right" evidence="1">
        <dbReference type="Rhea" id="RHEA:58197"/>
    </physiologicalReaction>
</comment>
<comment type="catalytic activity">
    <reaction evidence="1">
        <text>N(6)-acetyl-L-lysyl-[protein] + H2O = L-lysyl-[protein] + acetate</text>
        <dbReference type="Rhea" id="RHEA:58108"/>
        <dbReference type="Rhea" id="RHEA-COMP:9752"/>
        <dbReference type="Rhea" id="RHEA-COMP:10731"/>
        <dbReference type="ChEBI" id="CHEBI:15377"/>
        <dbReference type="ChEBI" id="CHEBI:29969"/>
        <dbReference type="ChEBI" id="CHEBI:30089"/>
        <dbReference type="ChEBI" id="CHEBI:61930"/>
    </reaction>
    <physiologicalReaction direction="left-to-right" evidence="1">
        <dbReference type="Rhea" id="RHEA:58109"/>
    </physiologicalReaction>
</comment>
<comment type="catalytic activity">
    <reaction evidence="1">
        <text>N(6)-(2E)-butenoyl-L-lysyl-[protein] + H2O = (2E)-2-butenoate + L-lysyl-[protein]</text>
        <dbReference type="Rhea" id="RHEA:69172"/>
        <dbReference type="Rhea" id="RHEA-COMP:9752"/>
        <dbReference type="Rhea" id="RHEA-COMP:13707"/>
        <dbReference type="ChEBI" id="CHEBI:15377"/>
        <dbReference type="ChEBI" id="CHEBI:29969"/>
        <dbReference type="ChEBI" id="CHEBI:35899"/>
        <dbReference type="ChEBI" id="CHEBI:137954"/>
    </reaction>
    <physiologicalReaction direction="left-to-right" evidence="1">
        <dbReference type="Rhea" id="RHEA:69173"/>
    </physiologicalReaction>
</comment>
<comment type="catalytic activity">
    <reaction evidence="1">
        <text>N(6)-(2-hydroxyisobutanoyl)-L-lysyl-[protein] + H2O = 2-hydroxy-2-methylpropanoate + L-lysyl-[protein]</text>
        <dbReference type="Rhea" id="RHEA:69176"/>
        <dbReference type="Rhea" id="RHEA-COMP:9752"/>
        <dbReference type="Rhea" id="RHEA-COMP:15921"/>
        <dbReference type="ChEBI" id="CHEBI:15377"/>
        <dbReference type="ChEBI" id="CHEBI:19641"/>
        <dbReference type="ChEBI" id="CHEBI:29969"/>
        <dbReference type="ChEBI" id="CHEBI:144968"/>
    </reaction>
    <physiologicalReaction direction="left-to-right" evidence="1">
        <dbReference type="Rhea" id="RHEA:69177"/>
    </physiologicalReaction>
</comment>
<comment type="catalytic activity">
    <reaction evidence="1">
        <text>N(6)-[(S)-lactoyl]-L-lysyl-[protein] + H2O = (S)-lactate + L-lysyl-[protein]</text>
        <dbReference type="Rhea" id="RHEA:81387"/>
        <dbReference type="Rhea" id="RHEA-COMP:9752"/>
        <dbReference type="Rhea" id="RHEA-COMP:19466"/>
        <dbReference type="ChEBI" id="CHEBI:15377"/>
        <dbReference type="ChEBI" id="CHEBI:16651"/>
        <dbReference type="ChEBI" id="CHEBI:29969"/>
        <dbReference type="ChEBI" id="CHEBI:231527"/>
    </reaction>
    <physiologicalReaction direction="left-to-right" evidence="1">
        <dbReference type="Rhea" id="RHEA:81388"/>
    </physiologicalReaction>
</comment>
<comment type="activity regulation">
    <text evidence="1">Inositol tetraphosphate (1D-myo-inositol 1,4,5,6-tetrakisphosphate) promotes the histone deacetylase activity by acting as an intermolecular glue between hdac3 and N-Cor repressor complex components.</text>
</comment>
<comment type="subcellular location">
    <subcellularLocation>
        <location evidence="1">Nucleus</location>
    </subcellularLocation>
    <subcellularLocation>
        <location evidence="1">Chromosome</location>
    </subcellularLocation>
    <subcellularLocation>
        <location evidence="1">Cytoplasm</location>
        <location evidence="1">Cytosol</location>
    </subcellularLocation>
</comment>
<comment type="similarity">
    <text evidence="4">Belongs to the histone deacetylase family. HD type 1 subfamily.</text>
</comment>
<feature type="chain" id="PRO_0000281032" description="Histone deacetylase 3">
    <location>
        <begin position="1"/>
        <end position="428"/>
    </location>
</feature>
<feature type="region of interest" description="Histone deacetylase">
    <location>
        <begin position="3"/>
        <end position="316"/>
    </location>
</feature>
<feature type="region of interest" description="Disordered" evidence="3">
    <location>
        <begin position="386"/>
        <end position="428"/>
    </location>
</feature>
<feature type="compositionally biased region" description="Basic and acidic residues" evidence="3">
    <location>
        <begin position="386"/>
        <end position="405"/>
    </location>
</feature>
<feature type="compositionally biased region" description="Basic and acidic residues" evidence="3">
    <location>
        <begin position="415"/>
        <end position="428"/>
    </location>
</feature>
<feature type="active site" evidence="2">
    <location>
        <position position="135"/>
    </location>
</feature>
<feature type="binding site" evidence="1">
    <location>
        <position position="17"/>
    </location>
    <ligand>
        <name>1D-myo-inositol 1,4,5,6-tetrakisphosphate</name>
        <dbReference type="ChEBI" id="CHEBI:57627"/>
    </ligand>
</feature>
<feature type="binding site" evidence="1">
    <location>
        <position position="21"/>
    </location>
    <ligand>
        <name>1D-myo-inositol 1,4,5,6-tetrakisphosphate</name>
        <dbReference type="ChEBI" id="CHEBI:57627"/>
    </ligand>
</feature>
<feature type="binding site" evidence="1">
    <location>
        <position position="25"/>
    </location>
    <ligand>
        <name>1D-myo-inositol 1,4,5,6-tetrakisphosphate</name>
        <dbReference type="ChEBI" id="CHEBI:57627"/>
    </ligand>
</feature>
<feature type="binding site" evidence="1">
    <location>
        <position position="170"/>
    </location>
    <ligand>
        <name>Zn(2+)</name>
        <dbReference type="ChEBI" id="CHEBI:29105"/>
    </ligand>
</feature>
<feature type="binding site" evidence="1">
    <location>
        <position position="172"/>
    </location>
    <ligand>
        <name>Zn(2+)</name>
        <dbReference type="ChEBI" id="CHEBI:29105"/>
    </ligand>
</feature>
<feature type="binding site" evidence="1">
    <location>
        <position position="259"/>
    </location>
    <ligand>
        <name>Zn(2+)</name>
        <dbReference type="ChEBI" id="CHEBI:29105"/>
    </ligand>
</feature>
<feature type="binding site" evidence="1">
    <location>
        <position position="265"/>
    </location>
    <ligand>
        <name>1D-myo-inositol 1,4,5,6-tetrakisphosphate</name>
        <dbReference type="ChEBI" id="CHEBI:57627"/>
    </ligand>
</feature>
<reference key="1">
    <citation type="submission" date="2006-10" db="EMBL/GenBank/DDBJ databases">
        <authorList>
            <consortium name="Sanger Xenopus tropicalis EST/cDNA project"/>
        </authorList>
    </citation>
    <scope>NUCLEOTIDE SEQUENCE [LARGE SCALE MRNA]</scope>
    <source>
        <tissue>Egg</tissue>
    </source>
</reference>
<name>HDAC3_XENTR</name>